<sequence length="215" mass="23995">MKIVLLGPPGAGKGTQAKSISNRYSIPHISTGDIFRKNISENTPLGMEARSYMDKGLLVPDEVTINMVKDRLQEDDCLSGYLLDGFPRTVAQAEALNEFLENRNEQLDTALLIDVPSEFILDRMTGRRVCTSCGGSFHIKFNPPTIDGKCNLCGSDIVQRKDDTVETVKERIDVYDKQTQPLIEFYKSKNLLSMVDGTKAIDQVFEDICKLLGEQ</sequence>
<protein>
    <recommendedName>
        <fullName evidence="1">Adenylate kinase</fullName>
        <shortName evidence="1">AK</shortName>
        <ecNumber evidence="1">2.7.4.3</ecNumber>
    </recommendedName>
    <alternativeName>
        <fullName evidence="1">ATP-AMP transphosphorylase</fullName>
    </alternativeName>
    <alternativeName>
        <fullName evidence="1">ATP:AMP phosphotransferase</fullName>
    </alternativeName>
    <alternativeName>
        <fullName evidence="1">Adenylate monophosphate kinase</fullName>
    </alternativeName>
</protein>
<gene>
    <name evidence="1" type="primary">adk</name>
    <name type="ordered locus">CLH_0258</name>
</gene>
<feature type="chain" id="PRO_1000100548" description="Adenylate kinase">
    <location>
        <begin position="1"/>
        <end position="215"/>
    </location>
</feature>
<feature type="region of interest" description="NMP" evidence="1">
    <location>
        <begin position="30"/>
        <end position="59"/>
    </location>
</feature>
<feature type="region of interest" description="LID" evidence="1">
    <location>
        <begin position="126"/>
        <end position="163"/>
    </location>
</feature>
<feature type="binding site" evidence="1">
    <location>
        <begin position="10"/>
        <end position="15"/>
    </location>
    <ligand>
        <name>ATP</name>
        <dbReference type="ChEBI" id="CHEBI:30616"/>
    </ligand>
</feature>
<feature type="binding site" evidence="1">
    <location>
        <position position="31"/>
    </location>
    <ligand>
        <name>AMP</name>
        <dbReference type="ChEBI" id="CHEBI:456215"/>
    </ligand>
</feature>
<feature type="binding site" evidence="1">
    <location>
        <position position="36"/>
    </location>
    <ligand>
        <name>AMP</name>
        <dbReference type="ChEBI" id="CHEBI:456215"/>
    </ligand>
</feature>
<feature type="binding site" evidence="1">
    <location>
        <begin position="57"/>
        <end position="59"/>
    </location>
    <ligand>
        <name>AMP</name>
        <dbReference type="ChEBI" id="CHEBI:456215"/>
    </ligand>
</feature>
<feature type="binding site" evidence="1">
    <location>
        <begin position="85"/>
        <end position="88"/>
    </location>
    <ligand>
        <name>AMP</name>
        <dbReference type="ChEBI" id="CHEBI:456215"/>
    </ligand>
</feature>
<feature type="binding site" evidence="1">
    <location>
        <position position="92"/>
    </location>
    <ligand>
        <name>AMP</name>
        <dbReference type="ChEBI" id="CHEBI:456215"/>
    </ligand>
</feature>
<feature type="binding site" evidence="1">
    <location>
        <position position="127"/>
    </location>
    <ligand>
        <name>ATP</name>
        <dbReference type="ChEBI" id="CHEBI:30616"/>
    </ligand>
</feature>
<feature type="binding site" evidence="1">
    <location>
        <position position="130"/>
    </location>
    <ligand>
        <name>Zn(2+)</name>
        <dbReference type="ChEBI" id="CHEBI:29105"/>
        <note>structural</note>
    </ligand>
</feature>
<feature type="binding site" evidence="1">
    <location>
        <position position="133"/>
    </location>
    <ligand>
        <name>Zn(2+)</name>
        <dbReference type="ChEBI" id="CHEBI:29105"/>
        <note>structural</note>
    </ligand>
</feature>
<feature type="binding site" evidence="1">
    <location>
        <begin position="136"/>
        <end position="137"/>
    </location>
    <ligand>
        <name>ATP</name>
        <dbReference type="ChEBI" id="CHEBI:30616"/>
    </ligand>
</feature>
<feature type="binding site" evidence="1">
    <location>
        <position position="150"/>
    </location>
    <ligand>
        <name>Zn(2+)</name>
        <dbReference type="ChEBI" id="CHEBI:29105"/>
        <note>structural</note>
    </ligand>
</feature>
<feature type="binding site" evidence="1">
    <location>
        <position position="153"/>
    </location>
    <ligand>
        <name>Zn(2+)</name>
        <dbReference type="ChEBI" id="CHEBI:29105"/>
        <note>structural</note>
    </ligand>
</feature>
<feature type="binding site" evidence="1">
    <location>
        <position position="160"/>
    </location>
    <ligand>
        <name>AMP</name>
        <dbReference type="ChEBI" id="CHEBI:456215"/>
    </ligand>
</feature>
<feature type="binding site" evidence="1">
    <location>
        <position position="171"/>
    </location>
    <ligand>
        <name>AMP</name>
        <dbReference type="ChEBI" id="CHEBI:456215"/>
    </ligand>
</feature>
<feature type="binding site" evidence="1">
    <location>
        <position position="199"/>
    </location>
    <ligand>
        <name>ATP</name>
        <dbReference type="ChEBI" id="CHEBI:30616"/>
    </ligand>
</feature>
<comment type="function">
    <text evidence="1">Catalyzes the reversible transfer of the terminal phosphate group between ATP and AMP. Plays an important role in cellular energy homeostasis and in adenine nucleotide metabolism.</text>
</comment>
<comment type="catalytic activity">
    <reaction evidence="1">
        <text>AMP + ATP = 2 ADP</text>
        <dbReference type="Rhea" id="RHEA:12973"/>
        <dbReference type="ChEBI" id="CHEBI:30616"/>
        <dbReference type="ChEBI" id="CHEBI:456215"/>
        <dbReference type="ChEBI" id="CHEBI:456216"/>
        <dbReference type="EC" id="2.7.4.3"/>
    </reaction>
</comment>
<comment type="pathway">
    <text evidence="1">Purine metabolism; AMP biosynthesis via salvage pathway; AMP from ADP: step 1/1.</text>
</comment>
<comment type="subunit">
    <text evidence="1">Monomer.</text>
</comment>
<comment type="subcellular location">
    <subcellularLocation>
        <location evidence="1">Cytoplasm</location>
    </subcellularLocation>
</comment>
<comment type="domain">
    <text evidence="1">Consists of three domains, a large central CORE domain and two small peripheral domains, NMPbind and LID, which undergo movements during catalysis. The LID domain closes over the site of phosphoryl transfer upon ATP binding. Assembling and dissambling the active center during each catalytic cycle provides an effective means to prevent ATP hydrolysis. Some bacteria have evolved a zinc-coordinating structure that stabilizes the LID domain.</text>
</comment>
<comment type="similarity">
    <text evidence="1">Belongs to the adenylate kinase family.</text>
</comment>
<evidence type="ECO:0000255" key="1">
    <source>
        <dbReference type="HAMAP-Rule" id="MF_00235"/>
    </source>
</evidence>
<organism>
    <name type="scientific">Clostridium botulinum (strain Alaska E43 / Type E3)</name>
    <dbReference type="NCBI Taxonomy" id="508767"/>
    <lineage>
        <taxon>Bacteria</taxon>
        <taxon>Bacillati</taxon>
        <taxon>Bacillota</taxon>
        <taxon>Clostridia</taxon>
        <taxon>Eubacteriales</taxon>
        <taxon>Clostridiaceae</taxon>
        <taxon>Clostridium</taxon>
    </lineage>
</organism>
<reference key="1">
    <citation type="submission" date="2008-05" db="EMBL/GenBank/DDBJ databases">
        <title>Complete genome sequence of Clostridium botulinum E3 str. Alaska E43.</title>
        <authorList>
            <person name="Brinkac L.M."/>
            <person name="Brown J.L."/>
            <person name="Bruce D."/>
            <person name="Detter C."/>
            <person name="Munk C."/>
            <person name="Smith L.A."/>
            <person name="Smith T.J."/>
            <person name="Sutton G."/>
            <person name="Brettin T.S."/>
        </authorList>
    </citation>
    <scope>NUCLEOTIDE SEQUENCE [LARGE SCALE GENOMIC DNA]</scope>
    <source>
        <strain>Alaska E43 / Type E3</strain>
    </source>
</reference>
<accession>B2UYD1</accession>
<keyword id="KW-0067">ATP-binding</keyword>
<keyword id="KW-0963">Cytoplasm</keyword>
<keyword id="KW-0418">Kinase</keyword>
<keyword id="KW-0479">Metal-binding</keyword>
<keyword id="KW-0545">Nucleotide biosynthesis</keyword>
<keyword id="KW-0547">Nucleotide-binding</keyword>
<keyword id="KW-0808">Transferase</keyword>
<keyword id="KW-0862">Zinc</keyword>
<dbReference type="EC" id="2.7.4.3" evidence="1"/>
<dbReference type="EMBL" id="CP001078">
    <property type="protein sequence ID" value="ACD51777.1"/>
    <property type="molecule type" value="Genomic_DNA"/>
</dbReference>
<dbReference type="RefSeq" id="WP_003372596.1">
    <property type="nucleotide sequence ID" value="NC_010723.1"/>
</dbReference>
<dbReference type="SMR" id="B2UYD1"/>
<dbReference type="KEGG" id="cbt:CLH_0258"/>
<dbReference type="HOGENOM" id="CLU_032354_1_2_9"/>
<dbReference type="UniPathway" id="UPA00588">
    <property type="reaction ID" value="UER00649"/>
</dbReference>
<dbReference type="GO" id="GO:0005737">
    <property type="term" value="C:cytoplasm"/>
    <property type="evidence" value="ECO:0007669"/>
    <property type="project" value="UniProtKB-SubCell"/>
</dbReference>
<dbReference type="GO" id="GO:0004017">
    <property type="term" value="F:adenylate kinase activity"/>
    <property type="evidence" value="ECO:0007669"/>
    <property type="project" value="UniProtKB-UniRule"/>
</dbReference>
<dbReference type="GO" id="GO:0005524">
    <property type="term" value="F:ATP binding"/>
    <property type="evidence" value="ECO:0007669"/>
    <property type="project" value="UniProtKB-UniRule"/>
</dbReference>
<dbReference type="GO" id="GO:0008270">
    <property type="term" value="F:zinc ion binding"/>
    <property type="evidence" value="ECO:0007669"/>
    <property type="project" value="UniProtKB-UniRule"/>
</dbReference>
<dbReference type="GO" id="GO:0044209">
    <property type="term" value="P:AMP salvage"/>
    <property type="evidence" value="ECO:0007669"/>
    <property type="project" value="UniProtKB-UniRule"/>
</dbReference>
<dbReference type="CDD" id="cd01428">
    <property type="entry name" value="ADK"/>
    <property type="match status" value="1"/>
</dbReference>
<dbReference type="FunFam" id="3.40.50.300:FF:000106">
    <property type="entry name" value="Adenylate kinase mitochondrial"/>
    <property type="match status" value="1"/>
</dbReference>
<dbReference type="Gene3D" id="3.40.50.300">
    <property type="entry name" value="P-loop containing nucleotide triphosphate hydrolases"/>
    <property type="match status" value="1"/>
</dbReference>
<dbReference type="HAMAP" id="MF_00235">
    <property type="entry name" value="Adenylate_kinase_Adk"/>
    <property type="match status" value="1"/>
</dbReference>
<dbReference type="InterPro" id="IPR006259">
    <property type="entry name" value="Adenyl_kin_sub"/>
</dbReference>
<dbReference type="InterPro" id="IPR000850">
    <property type="entry name" value="Adenylat/UMP-CMP_kin"/>
</dbReference>
<dbReference type="InterPro" id="IPR033690">
    <property type="entry name" value="Adenylat_kinase_CS"/>
</dbReference>
<dbReference type="InterPro" id="IPR007862">
    <property type="entry name" value="Adenylate_kinase_lid-dom"/>
</dbReference>
<dbReference type="InterPro" id="IPR027417">
    <property type="entry name" value="P-loop_NTPase"/>
</dbReference>
<dbReference type="NCBIfam" id="TIGR01351">
    <property type="entry name" value="adk"/>
    <property type="match status" value="1"/>
</dbReference>
<dbReference type="NCBIfam" id="NF001380">
    <property type="entry name" value="PRK00279.1-2"/>
    <property type="match status" value="1"/>
</dbReference>
<dbReference type="NCBIfam" id="NF001381">
    <property type="entry name" value="PRK00279.1-3"/>
    <property type="match status" value="1"/>
</dbReference>
<dbReference type="NCBIfam" id="NF011100">
    <property type="entry name" value="PRK14527.1"/>
    <property type="match status" value="1"/>
</dbReference>
<dbReference type="PANTHER" id="PTHR23359">
    <property type="entry name" value="NUCLEOTIDE KINASE"/>
    <property type="match status" value="1"/>
</dbReference>
<dbReference type="Pfam" id="PF00406">
    <property type="entry name" value="ADK"/>
    <property type="match status" value="1"/>
</dbReference>
<dbReference type="Pfam" id="PF05191">
    <property type="entry name" value="ADK_lid"/>
    <property type="match status" value="1"/>
</dbReference>
<dbReference type="PRINTS" id="PR00094">
    <property type="entry name" value="ADENYLTKNASE"/>
</dbReference>
<dbReference type="SUPFAM" id="SSF52540">
    <property type="entry name" value="P-loop containing nucleoside triphosphate hydrolases"/>
    <property type="match status" value="1"/>
</dbReference>
<dbReference type="PROSITE" id="PS00113">
    <property type="entry name" value="ADENYLATE_KINASE"/>
    <property type="match status" value="1"/>
</dbReference>
<name>KAD_CLOBA</name>
<proteinExistence type="inferred from homology"/>